<evidence type="ECO:0000255" key="1">
    <source>
        <dbReference type="HAMAP-Rule" id="MF_00304"/>
    </source>
</evidence>
<keyword id="KW-0408">Iron</keyword>
<keyword id="KW-0479">Metal-binding</keyword>
<keyword id="KW-0520">NAD</keyword>
<keyword id="KW-1185">Reference proteome</keyword>
<keyword id="KW-0784">Thiamine biosynthesis</keyword>
<keyword id="KW-0808">Transferase</keyword>
<protein>
    <recommendedName>
        <fullName evidence="1">Thiamine thiazole synthase</fullName>
        <ecNumber evidence="1">2.4.2.59</ecNumber>
    </recommendedName>
</protein>
<name>THI4_SACS2</name>
<reference key="1">
    <citation type="journal article" date="2001" name="Proc. Natl. Acad. Sci. U.S.A.">
        <title>The complete genome of the crenarchaeon Sulfolobus solfataricus P2.</title>
        <authorList>
            <person name="She Q."/>
            <person name="Singh R.K."/>
            <person name="Confalonieri F."/>
            <person name="Zivanovic Y."/>
            <person name="Allard G."/>
            <person name="Awayez M.J."/>
            <person name="Chan-Weiher C.C.-Y."/>
            <person name="Clausen I.G."/>
            <person name="Curtis B.A."/>
            <person name="De Moors A."/>
            <person name="Erauso G."/>
            <person name="Fletcher C."/>
            <person name="Gordon P.M.K."/>
            <person name="Heikamp-de Jong I."/>
            <person name="Jeffries A.C."/>
            <person name="Kozera C.J."/>
            <person name="Medina N."/>
            <person name="Peng X."/>
            <person name="Thi-Ngoc H.P."/>
            <person name="Redder P."/>
            <person name="Schenk M.E."/>
            <person name="Theriault C."/>
            <person name="Tolstrup N."/>
            <person name="Charlebois R.L."/>
            <person name="Doolittle W.F."/>
            <person name="Duguet M."/>
            <person name="Gaasterland T."/>
            <person name="Garrett R.A."/>
            <person name="Ragan M.A."/>
            <person name="Sensen C.W."/>
            <person name="Van der Oost J."/>
        </authorList>
    </citation>
    <scope>NUCLEOTIDE SEQUENCE [LARGE SCALE GENOMIC DNA]</scope>
    <source>
        <strain>ATCC 35092 / DSM 1617 / JCM 11322 / P2</strain>
    </source>
</reference>
<organism>
    <name type="scientific">Saccharolobus solfataricus (strain ATCC 35092 / DSM 1617 / JCM 11322 / P2)</name>
    <name type="common">Sulfolobus solfataricus</name>
    <dbReference type="NCBI Taxonomy" id="273057"/>
    <lineage>
        <taxon>Archaea</taxon>
        <taxon>Thermoproteota</taxon>
        <taxon>Thermoprotei</taxon>
        <taxon>Sulfolobales</taxon>
        <taxon>Sulfolobaceae</taxon>
        <taxon>Saccharolobus</taxon>
    </lineage>
</organism>
<proteinExistence type="inferred from homology"/>
<comment type="function">
    <text evidence="1">Involved in the biosynthesis of the thiazole moiety of thiamine. Catalyzes the conversion of NAD and glycine to adenosine diphosphate 5-(2-hydroxyethyl)-4-methylthiazole-2-carboxylate (ADT), an adenylated thiazole intermediate, using free sulfide as a source of sulfur.</text>
</comment>
<comment type="catalytic activity">
    <reaction evidence="1">
        <text>hydrogen sulfide + glycine + NAD(+) = ADP-5-ethyl-4-methylthiazole-2-carboxylate + nicotinamide + 3 H2O + H(+)</text>
        <dbReference type="Rhea" id="RHEA:55704"/>
        <dbReference type="ChEBI" id="CHEBI:15377"/>
        <dbReference type="ChEBI" id="CHEBI:15378"/>
        <dbReference type="ChEBI" id="CHEBI:17154"/>
        <dbReference type="ChEBI" id="CHEBI:29919"/>
        <dbReference type="ChEBI" id="CHEBI:57305"/>
        <dbReference type="ChEBI" id="CHEBI:57540"/>
        <dbReference type="ChEBI" id="CHEBI:139151"/>
        <dbReference type="EC" id="2.4.2.59"/>
    </reaction>
</comment>
<comment type="cofactor">
    <cofactor evidence="1">
        <name>Fe(2+)</name>
        <dbReference type="ChEBI" id="CHEBI:29033"/>
    </cofactor>
</comment>
<comment type="pathway">
    <text evidence="1">Cofactor biosynthesis; thiamine diphosphate biosynthesis.</text>
</comment>
<comment type="subunit">
    <text evidence="1">Homooctamer; tetramer of dimers.</text>
</comment>
<comment type="similarity">
    <text evidence="1">Belongs to the THI4 family.</text>
</comment>
<sequence length="267" mass="28630">MEVKIKQVDEVKISRYIIKETMEDWYQFVESDVVIVGAGPSGLSAAYYLAKAGLKTLVFERRLSFGGGIGGGAMLFHKLIIEKPADEILREVNIRLKEVEEGVYVVDSAEFMAKLATAAIDAGAKIIHGVTVDDVIFRENPLRVAGVAVEWTATQMASLHVDPIFISAKAVVDATGHDAEVISVAARKIPELGIVIPGEKSAYSERAEELTVINTGKVAEGLYATGMAVTEVKGLPRMGPIFGAMVLSGKAVAGEITKDLLKSEIRA</sequence>
<feature type="chain" id="PRO_0000300740" description="Thiamine thiazole synthase">
    <location>
        <begin position="1"/>
        <end position="267"/>
    </location>
</feature>
<feature type="binding site" description="in other chain" evidence="1">
    <location>
        <position position="41"/>
    </location>
    <ligand>
        <name>NAD(+)</name>
        <dbReference type="ChEBI" id="CHEBI:57540"/>
        <note>ligand shared between two adjacent protomers</note>
    </ligand>
</feature>
<feature type="binding site" description="in other chain" evidence="1">
    <location>
        <begin position="60"/>
        <end position="61"/>
    </location>
    <ligand>
        <name>NAD(+)</name>
        <dbReference type="ChEBI" id="CHEBI:57540"/>
        <note>ligand shared between two adjacent protomers</note>
    </ligand>
</feature>
<feature type="binding site" description="in other chain" evidence="1">
    <location>
        <position position="68"/>
    </location>
    <ligand>
        <name>NAD(+)</name>
        <dbReference type="ChEBI" id="CHEBI:57540"/>
        <note>ligand shared between two adjacent protomers</note>
    </ligand>
</feature>
<feature type="binding site" description="in other chain" evidence="1">
    <location>
        <position position="132"/>
    </location>
    <ligand>
        <name>NAD(+)</name>
        <dbReference type="ChEBI" id="CHEBI:57540"/>
        <note>ligand shared between two adjacent protomers</note>
    </ligand>
</feature>
<feature type="binding site" evidence="1">
    <location>
        <begin position="160"/>
        <end position="162"/>
    </location>
    <ligand>
        <name>NAD(+)</name>
        <dbReference type="ChEBI" id="CHEBI:57540"/>
        <note>ligand shared between two adjacent protomers</note>
    </ligand>
</feature>
<feature type="binding site" evidence="1">
    <location>
        <position position="162"/>
    </location>
    <ligand>
        <name>Fe cation</name>
        <dbReference type="ChEBI" id="CHEBI:24875"/>
        <note>ligand shared between two adjacent protomers</note>
    </ligand>
</feature>
<feature type="binding site" description="in other chain" evidence="1">
    <location>
        <position position="177"/>
    </location>
    <ligand>
        <name>Fe cation</name>
        <dbReference type="ChEBI" id="CHEBI:24875"/>
        <note>ligand shared between two adjacent protomers</note>
    </ligand>
</feature>
<feature type="binding site" description="in other chain" evidence="1">
    <location>
        <position position="227"/>
    </location>
    <ligand>
        <name>NAD(+)</name>
        <dbReference type="ChEBI" id="CHEBI:57540"/>
        <note>ligand shared between two adjacent protomers</note>
    </ligand>
</feature>
<feature type="binding site" evidence="1">
    <location>
        <position position="237"/>
    </location>
    <ligand>
        <name>glycine</name>
        <dbReference type="ChEBI" id="CHEBI:57305"/>
    </ligand>
</feature>
<dbReference type="EC" id="2.4.2.59" evidence="1"/>
<dbReference type="EMBL" id="AE006641">
    <property type="protein sequence ID" value="AAK40761.1"/>
    <property type="molecule type" value="Genomic_DNA"/>
</dbReference>
<dbReference type="PIR" id="B99188">
    <property type="entry name" value="B99188"/>
</dbReference>
<dbReference type="RefSeq" id="WP_009988737.1">
    <property type="nucleotide sequence ID" value="NC_002754.1"/>
</dbReference>
<dbReference type="SMR" id="Q97ZY5"/>
<dbReference type="FunCoup" id="Q97ZY5">
    <property type="interactions" value="148"/>
</dbReference>
<dbReference type="STRING" id="273057.SSO0436"/>
<dbReference type="PaxDb" id="273057-SSO0436"/>
<dbReference type="EnsemblBacteria" id="AAK40761">
    <property type="protein sequence ID" value="AAK40761"/>
    <property type="gene ID" value="SSO0436"/>
</dbReference>
<dbReference type="KEGG" id="sso:SSO0436"/>
<dbReference type="PATRIC" id="fig|273057.12.peg.429"/>
<dbReference type="eggNOG" id="arCOG00574">
    <property type="taxonomic scope" value="Archaea"/>
</dbReference>
<dbReference type="HOGENOM" id="CLU_053727_2_0_2"/>
<dbReference type="InParanoid" id="Q97ZY5"/>
<dbReference type="PhylomeDB" id="Q97ZY5"/>
<dbReference type="UniPathway" id="UPA00060"/>
<dbReference type="Proteomes" id="UP000001974">
    <property type="component" value="Chromosome"/>
</dbReference>
<dbReference type="GO" id="GO:0005506">
    <property type="term" value="F:iron ion binding"/>
    <property type="evidence" value="ECO:0000318"/>
    <property type="project" value="GO_Central"/>
</dbReference>
<dbReference type="GO" id="GO:0016763">
    <property type="term" value="F:pentosyltransferase activity"/>
    <property type="evidence" value="ECO:0007669"/>
    <property type="project" value="UniProtKB-UniRule"/>
</dbReference>
<dbReference type="GO" id="GO:0009228">
    <property type="term" value="P:thiamine biosynthetic process"/>
    <property type="evidence" value="ECO:0007669"/>
    <property type="project" value="UniProtKB-KW"/>
</dbReference>
<dbReference type="GO" id="GO:0009229">
    <property type="term" value="P:thiamine diphosphate biosynthetic process"/>
    <property type="evidence" value="ECO:0007669"/>
    <property type="project" value="UniProtKB-UniRule"/>
</dbReference>
<dbReference type="GO" id="GO:0052837">
    <property type="term" value="P:thiazole biosynthetic process"/>
    <property type="evidence" value="ECO:0000318"/>
    <property type="project" value="GO_Central"/>
</dbReference>
<dbReference type="Gene3D" id="3.50.50.60">
    <property type="entry name" value="FAD/NAD(P)-binding domain"/>
    <property type="match status" value="1"/>
</dbReference>
<dbReference type="HAMAP" id="MF_00304">
    <property type="entry name" value="Thi4"/>
    <property type="match status" value="1"/>
</dbReference>
<dbReference type="InterPro" id="IPR036188">
    <property type="entry name" value="FAD/NAD-bd_sf"/>
</dbReference>
<dbReference type="InterPro" id="IPR002922">
    <property type="entry name" value="Thi4_fam"/>
</dbReference>
<dbReference type="InterPro" id="IPR022828">
    <property type="entry name" value="Thi4_prok"/>
</dbReference>
<dbReference type="NCBIfam" id="TIGR00292">
    <property type="entry name" value="sulfide-dependent adenosine diphosphate thiazole synthase"/>
    <property type="match status" value="1"/>
</dbReference>
<dbReference type="PANTHER" id="PTHR43422">
    <property type="entry name" value="THIAMINE THIAZOLE SYNTHASE"/>
    <property type="match status" value="1"/>
</dbReference>
<dbReference type="PANTHER" id="PTHR43422:SF3">
    <property type="entry name" value="THIAMINE THIAZOLE SYNTHASE"/>
    <property type="match status" value="1"/>
</dbReference>
<dbReference type="Pfam" id="PF01946">
    <property type="entry name" value="Thi4"/>
    <property type="match status" value="1"/>
</dbReference>
<dbReference type="PRINTS" id="PR00368">
    <property type="entry name" value="FADPNR"/>
</dbReference>
<dbReference type="PRINTS" id="PR00411">
    <property type="entry name" value="PNDRDTASEI"/>
</dbReference>
<dbReference type="SUPFAM" id="SSF51905">
    <property type="entry name" value="FAD/NAD(P)-binding domain"/>
    <property type="match status" value="1"/>
</dbReference>
<gene>
    <name evidence="1" type="primary">thi4</name>
    <name type="ordered locus">SSO0436</name>
</gene>
<accession>Q97ZY5</accession>